<keyword id="KW-0167">Capsid protein</keyword>
<keyword id="KW-1035">Host cytoplasm</keyword>
<keyword id="KW-1152">Outer capsid protein</keyword>
<keyword id="KW-1185">Reference proteome</keyword>
<keyword id="KW-0946">Virion</keyword>
<comment type="function">
    <text evidence="4">Minor capsid protein present in the outer capsid, which is required for adsorption of the virus onto host insect cells (Potential). Could play a role in the host plant virus induced dwarfism.</text>
</comment>
<comment type="subunit">
    <text evidence="2">Interacts with host ent-kaurene oxidases OSKO1, OSKO2, OSKOL4 and OSKOL5; this interaction.</text>
</comment>
<comment type="subcellular location">
    <subcellularLocation>
        <location evidence="4">Virion</location>
    </subcellularLocation>
    <subcellularLocation>
        <location evidence="3">Host cytoplasm</location>
    </subcellularLocation>
    <text>Found in the peripheral regions of spherical cytoplasmic structures, called virus factories, that appear early after infection and are the site of viral replication and packaging.</text>
</comment>
<comment type="similarity">
    <text evidence="4">Belongs to the phytoreovirus minor outer capsid protein P2 family.</text>
</comment>
<accession>Q98632</accession>
<sequence>MAYPNDVRNVWDVYNVFRDVPNREHLIRDIRNGLVTVRNLTNMLTNMERDDQLIIAQLSNMMKSLSIGIEKAQNELSKLKTTDADRAAVLADYQTSVLNIERNTMLLTGYFKQLVLDLTGYVGASVYPILPFMITGDQSMMVDSINVNMKNVFDDKHEQEIVLPIHPACFVSTITEDTSSVVYADGDELYSVHVRHENMTMYVNVLGETVETRQLSMIGESIVPDDFAPSLLILRFSQDSVGEVFYLSHDNIKKFLGHSLEYTDKYVIFDVARRASTTRNTITDGFCSVDGVPYLDGRFIYQPSGISADSNICAIYNSYVLDVLRYITECEVDTLRSVYDRTSSTVFSKTDVLRPRLLTMQSNISALSAATPQLANDVITSDSTDLLSLGTVLTVSNEFTADDTTLSTSLAGHCQVDYSEGSPQDKSMSIPVSCDSSQLASSTVHSYSADILGHGLKGDRNLNLMINVPGLMNPQKVTVDYVYSDGYKLNFASVVAPDAPFWINATLQLSLSPSAHNMLSKLTPLDNDACPGLKAQANTPVLVSMTINLDDATPALGGEVIQNCVFKIHHGDDVYSFVTDFDVISYTSTSGTNCLKLISSVDITSQLPSDMWIYVMNGSPDAAFISGDSVNMSSVDWHQSTSQTVGNYVYATMKAYWNVTSYDVEARPYATYVPGKINFTAIDHADVFVDDYNTGVNSYVIVNSRIYYKGNSSIYEVPSGSFIKVSYFTSPLKNPTVDAYNAEISRNSAYLIKANASLDSVAAMLSNISNRIDAMERLMEPTRAHRIAGVVSSIGGVISLGMPLLGAIVVTIGSIISIADPDKQGIDYHSVANAFMSWCQYAAVCRYEYGLLKRGDEKLDVLSFMPKRVVSDFKNKPDVISLPELGESVLRGSSTDYLDTEINIIYNDMQLLGQGKLSDWLNKTVSKVENNAANFFERNLVKSLANKEVLPVHARVEITQTEKIGDVYRTTILYTGINEGSYLGGDVFASRLGDKNILRMNGFESGPGRFKAIVESTTEVGNFRVVDWTVSGMSRYEIYAAAGEVYPSKDPSHADVQLLYESIVRDLTTRDGSFVLKHHDVLLLPGQLDAFEELIIKNASNYQYAFIGSNCSKLCA</sequence>
<organism>
    <name type="scientific">Rice dwarf virus (isolate Fujian)</name>
    <name type="common">RDV</name>
    <dbReference type="NCBI Taxonomy" id="142804"/>
    <lineage>
        <taxon>Viruses</taxon>
        <taxon>Riboviria</taxon>
        <taxon>Orthornavirae</taxon>
        <taxon>Duplornaviricota</taxon>
        <taxon>Resentoviricetes</taxon>
        <taxon>Reovirales</taxon>
        <taxon>Sedoreoviridae</taxon>
        <taxon>Phytoreovirus</taxon>
        <taxon>Rice dwarf virus</taxon>
    </lineage>
</organism>
<reference key="1">
    <citation type="journal article" date="1994" name="Intervirology">
        <title>Nucleotide sequence of rice dwarf phytoreovirus genome segment 2: completion of sequence analyses of rice dwarf virus.</title>
        <authorList>
            <person name="Uyeda I."/>
            <person name="Suda N."/>
            <person name="Yamada N."/>
            <person name="Kudo H."/>
            <person name="Murao K."/>
            <person name="Suga H."/>
            <person name="Kimura I."/>
            <person name="Shikata E."/>
            <person name="Kitagawa Y."/>
            <person name="Kusano T."/>
        </authorList>
    </citation>
    <scope>NUCLEOTIDE SEQUENCE [GENOMIC RNA]</scope>
</reference>
<reference key="2">
    <citation type="journal article" date="1999" name="Wei Sheng Wu Xue Bao">
        <title>Molecular cloning and sequenceing of outer capsid protein gene of rice dwarf virus and its expression in Escherichia coli.</title>
        <authorList>
            <person name="Lu R."/>
            <person name="Li Y."/>
            <person name="Yang C."/>
            <person name="Yan H."/>
            <person name="Chen Z."/>
        </authorList>
    </citation>
    <scope>NUCLEOTIDE SEQUENCE [GENOMIC RNA]</scope>
</reference>
<reference key="3">
    <citation type="journal article" date="2005" name="Plant Physiol.">
        <title>The rice dwarf virus P2 protein interacts with ent-kaurene oxidases in vivo, leading to reduced biosynthesis of gibberellins and rice dwarf symptoms.</title>
        <authorList>
            <person name="Zhu S."/>
            <person name="Gao F."/>
            <person name="Cao X."/>
            <person name="Chen M."/>
            <person name="Ye G."/>
            <person name="Wei C."/>
            <person name="Li Y."/>
        </authorList>
    </citation>
    <scope>INTERACTION WITH RICE ENT-KAURENE OXIDASES OSKO1; OSKO2; OSKOL4 AND OSKOL5</scope>
</reference>
<reference key="4">
    <citation type="journal article" date="2006" name="J. Gen. Virol.">
        <title>Pns12 protein of Rice dwarf virus is essential for formation of viroplasms and nucleation of viral-assembly complexes.</title>
        <authorList>
            <person name="Wei T."/>
            <person name="Shimizu T."/>
            <person name="Hagiwara K."/>
            <person name="Kikuchi A."/>
            <person name="Moriyasu Y."/>
            <person name="Suzuki N."/>
            <person name="Chen H."/>
            <person name="Omura T."/>
        </authorList>
    </citation>
    <scope>SUBCELLULAR LOCATION</scope>
</reference>
<organismHost>
    <name type="scientific">Alopecurus aequalis</name>
    <dbReference type="NCBI Taxonomy" id="114194"/>
</organismHost>
<organismHost>
    <name type="scientific">Echinochloa crus-galli</name>
    <name type="common">Barnyard grass</name>
    <name type="synonym">Panicum crus-galli</name>
    <dbReference type="NCBI Taxonomy" id="90397"/>
</organismHost>
<organismHost>
    <name type="scientific">Nephotettix cincticeps</name>
    <name type="common">Green rice leafhopper</name>
    <name type="synonym">Selenocephalus cincticeps</name>
    <dbReference type="NCBI Taxonomy" id="94400"/>
</organismHost>
<organismHost>
    <name type="scientific">Oryza sativa</name>
    <name type="common">Rice</name>
    <dbReference type="NCBI Taxonomy" id="4530"/>
</organismHost>
<organismHost>
    <name type="scientific">Paspalum</name>
    <dbReference type="NCBI Taxonomy" id="147271"/>
</organismHost>
<proteinExistence type="evidence at protein level"/>
<protein>
    <recommendedName>
        <fullName>Minor outer capsid protein P2</fullName>
    </recommendedName>
</protein>
<dbReference type="EMBL" id="U73202">
    <property type="protein sequence ID" value="AAB18744.1"/>
    <property type="molecule type" value="Genomic_RNA"/>
</dbReference>
<dbReference type="RefSeq" id="NP_620545.1">
    <property type="nucleotide sequence ID" value="NC_003774.1"/>
</dbReference>
<dbReference type="GeneID" id="956506"/>
<dbReference type="KEGG" id="vg:956506"/>
<dbReference type="Proteomes" id="UP000002239">
    <property type="component" value="Genome"/>
</dbReference>
<dbReference type="GO" id="GO:0030430">
    <property type="term" value="C:host cell cytoplasm"/>
    <property type="evidence" value="ECO:0007669"/>
    <property type="project" value="UniProtKB-SubCell"/>
</dbReference>
<dbReference type="GO" id="GO:0039624">
    <property type="term" value="C:viral outer capsid"/>
    <property type="evidence" value="ECO:0007669"/>
    <property type="project" value="UniProtKB-KW"/>
</dbReference>
<dbReference type="GO" id="GO:0008233">
    <property type="term" value="F:peptidase activity"/>
    <property type="evidence" value="ECO:0007669"/>
    <property type="project" value="InterPro"/>
</dbReference>
<dbReference type="InterPro" id="IPR008580">
    <property type="entry name" value="PPPDE_dom"/>
</dbReference>
<dbReference type="PROSITE" id="PS51858">
    <property type="entry name" value="PPPDE"/>
    <property type="match status" value="1"/>
</dbReference>
<name>P2_RDVF</name>
<evidence type="ECO:0000255" key="1">
    <source>
        <dbReference type="PROSITE-ProRule" id="PRU01205"/>
    </source>
</evidence>
<evidence type="ECO:0000269" key="2">
    <source>
    </source>
</evidence>
<evidence type="ECO:0000269" key="3">
    <source>
    </source>
</evidence>
<evidence type="ECO:0000305" key="4"/>
<feature type="chain" id="PRO_0000222779" description="Minor outer capsid protein P2">
    <location>
        <begin position="1"/>
        <end position="1116"/>
    </location>
</feature>
<feature type="domain" description="PPPDE" evidence="1">
    <location>
        <begin position="929"/>
        <end position="1116"/>
    </location>
</feature>
<feature type="active site" evidence="1">
    <location>
        <position position="953"/>
    </location>
</feature>
<feature type="active site" evidence="1">
    <location>
        <position position="1111"/>
    </location>
</feature>